<name>MURQ_CLOB1</name>
<feature type="chain" id="PRO_1000009110" description="N-acetylmuramic acid 6-phosphate etherase">
    <location>
        <begin position="1"/>
        <end position="302"/>
    </location>
</feature>
<feature type="domain" description="SIS" evidence="1">
    <location>
        <begin position="58"/>
        <end position="221"/>
    </location>
</feature>
<feature type="active site" description="Proton donor" evidence="1">
    <location>
        <position position="86"/>
    </location>
</feature>
<feature type="active site" evidence="1">
    <location>
        <position position="117"/>
    </location>
</feature>
<comment type="function">
    <text evidence="1">Specifically catalyzes the cleavage of the D-lactyl ether substituent of MurNAc 6-phosphate, producing GlcNAc 6-phosphate and D-lactate.</text>
</comment>
<comment type="catalytic activity">
    <reaction evidence="1">
        <text>N-acetyl-D-muramate 6-phosphate + H2O = N-acetyl-D-glucosamine 6-phosphate + (R)-lactate</text>
        <dbReference type="Rhea" id="RHEA:26410"/>
        <dbReference type="ChEBI" id="CHEBI:15377"/>
        <dbReference type="ChEBI" id="CHEBI:16004"/>
        <dbReference type="ChEBI" id="CHEBI:57513"/>
        <dbReference type="ChEBI" id="CHEBI:58722"/>
        <dbReference type="EC" id="4.2.1.126"/>
    </reaction>
</comment>
<comment type="pathway">
    <text evidence="1">Amino-sugar metabolism; N-acetylmuramate degradation.</text>
</comment>
<comment type="subunit">
    <text evidence="1">Homodimer.</text>
</comment>
<comment type="miscellaneous">
    <text evidence="1">A lyase-type mechanism (elimination/hydration) is suggested for the cleavage of the lactyl ether bond of MurNAc 6-phosphate, with the formation of an alpha,beta-unsaturated aldehyde intermediate with (E)-stereochemistry, followed by the syn addition of water to give product.</text>
</comment>
<comment type="similarity">
    <text evidence="1">Belongs to the GCKR-like family. MurNAc-6-P etherase subfamily.</text>
</comment>
<accession>A7FTM1</accession>
<protein>
    <recommendedName>
        <fullName evidence="1">N-acetylmuramic acid 6-phosphate etherase</fullName>
        <shortName evidence="1">MurNAc-6-P etherase</shortName>
        <ecNumber evidence="1">4.2.1.126</ecNumber>
    </recommendedName>
    <alternativeName>
        <fullName evidence="1">N-acetylmuramic acid 6-phosphate hydrolase</fullName>
    </alternativeName>
    <alternativeName>
        <fullName evidence="1">N-acetylmuramic acid 6-phosphate lyase</fullName>
    </alternativeName>
</protein>
<gene>
    <name evidence="1" type="primary">murQ</name>
    <name type="ordered locus">CLB_1371</name>
</gene>
<dbReference type="EC" id="4.2.1.126" evidence="1"/>
<dbReference type="EMBL" id="CP000726">
    <property type="protein sequence ID" value="ABS35237.1"/>
    <property type="molecule type" value="Genomic_DNA"/>
</dbReference>
<dbReference type="RefSeq" id="WP_011948949.1">
    <property type="nucleotide sequence ID" value="NC_009697.1"/>
</dbReference>
<dbReference type="SMR" id="A7FTM1"/>
<dbReference type="GeneID" id="5185598"/>
<dbReference type="KEGG" id="cba:CLB_1371"/>
<dbReference type="HOGENOM" id="CLU_049049_1_1_9"/>
<dbReference type="UniPathway" id="UPA00342"/>
<dbReference type="GO" id="GO:0097367">
    <property type="term" value="F:carbohydrate derivative binding"/>
    <property type="evidence" value="ECO:0007669"/>
    <property type="project" value="InterPro"/>
</dbReference>
<dbReference type="GO" id="GO:0016835">
    <property type="term" value="F:carbon-oxygen lyase activity"/>
    <property type="evidence" value="ECO:0007669"/>
    <property type="project" value="UniProtKB-UniRule"/>
</dbReference>
<dbReference type="GO" id="GO:0016803">
    <property type="term" value="F:ether hydrolase activity"/>
    <property type="evidence" value="ECO:0007669"/>
    <property type="project" value="TreeGrafter"/>
</dbReference>
<dbReference type="GO" id="GO:0046348">
    <property type="term" value="P:amino sugar catabolic process"/>
    <property type="evidence" value="ECO:0007669"/>
    <property type="project" value="InterPro"/>
</dbReference>
<dbReference type="GO" id="GO:0097173">
    <property type="term" value="P:N-acetylmuramic acid catabolic process"/>
    <property type="evidence" value="ECO:0007669"/>
    <property type="project" value="UniProtKB-UniPathway"/>
</dbReference>
<dbReference type="GO" id="GO:0009254">
    <property type="term" value="P:peptidoglycan turnover"/>
    <property type="evidence" value="ECO:0007669"/>
    <property type="project" value="TreeGrafter"/>
</dbReference>
<dbReference type="CDD" id="cd05007">
    <property type="entry name" value="SIS_Etherase"/>
    <property type="match status" value="1"/>
</dbReference>
<dbReference type="FunFam" id="1.10.8.1080:FF:000001">
    <property type="entry name" value="N-acetylmuramic acid 6-phosphate etherase"/>
    <property type="match status" value="1"/>
</dbReference>
<dbReference type="FunFam" id="3.40.50.10490:FF:000014">
    <property type="entry name" value="N-acetylmuramic acid 6-phosphate etherase"/>
    <property type="match status" value="1"/>
</dbReference>
<dbReference type="Gene3D" id="1.10.8.1080">
    <property type="match status" value="1"/>
</dbReference>
<dbReference type="Gene3D" id="3.40.50.10490">
    <property type="entry name" value="Glucose-6-phosphate isomerase like protein, domain 1"/>
    <property type="match status" value="1"/>
</dbReference>
<dbReference type="HAMAP" id="MF_00068">
    <property type="entry name" value="MurQ"/>
    <property type="match status" value="1"/>
</dbReference>
<dbReference type="InterPro" id="IPR005488">
    <property type="entry name" value="Etherase_MurQ"/>
</dbReference>
<dbReference type="InterPro" id="IPR005486">
    <property type="entry name" value="Glucokinase_regulatory_CS"/>
</dbReference>
<dbReference type="InterPro" id="IPR040190">
    <property type="entry name" value="MURQ/GCKR"/>
</dbReference>
<dbReference type="InterPro" id="IPR001347">
    <property type="entry name" value="SIS_dom"/>
</dbReference>
<dbReference type="InterPro" id="IPR046348">
    <property type="entry name" value="SIS_dom_sf"/>
</dbReference>
<dbReference type="NCBIfam" id="TIGR00274">
    <property type="entry name" value="N-acetylmuramic acid 6-phosphate etherase"/>
    <property type="match status" value="1"/>
</dbReference>
<dbReference type="NCBIfam" id="NF003915">
    <property type="entry name" value="PRK05441.1"/>
    <property type="match status" value="1"/>
</dbReference>
<dbReference type="NCBIfam" id="NF009222">
    <property type="entry name" value="PRK12570.1"/>
    <property type="match status" value="1"/>
</dbReference>
<dbReference type="PANTHER" id="PTHR10088">
    <property type="entry name" value="GLUCOKINASE REGULATORY PROTEIN"/>
    <property type="match status" value="1"/>
</dbReference>
<dbReference type="PANTHER" id="PTHR10088:SF4">
    <property type="entry name" value="GLUCOKINASE REGULATORY PROTEIN"/>
    <property type="match status" value="1"/>
</dbReference>
<dbReference type="Pfam" id="PF22645">
    <property type="entry name" value="GKRP_SIS_N"/>
    <property type="match status" value="1"/>
</dbReference>
<dbReference type="SUPFAM" id="SSF53697">
    <property type="entry name" value="SIS domain"/>
    <property type="match status" value="1"/>
</dbReference>
<dbReference type="PROSITE" id="PS01272">
    <property type="entry name" value="GCKR"/>
    <property type="match status" value="1"/>
</dbReference>
<dbReference type="PROSITE" id="PS51464">
    <property type="entry name" value="SIS"/>
    <property type="match status" value="1"/>
</dbReference>
<organism>
    <name type="scientific">Clostridium botulinum (strain ATCC 19397 / Type A)</name>
    <dbReference type="NCBI Taxonomy" id="441770"/>
    <lineage>
        <taxon>Bacteria</taxon>
        <taxon>Bacillati</taxon>
        <taxon>Bacillota</taxon>
        <taxon>Clostridia</taxon>
        <taxon>Eubacteriales</taxon>
        <taxon>Clostridiaceae</taxon>
        <taxon>Clostridium</taxon>
    </lineage>
</organism>
<keyword id="KW-0119">Carbohydrate metabolism</keyword>
<keyword id="KW-0456">Lyase</keyword>
<evidence type="ECO:0000255" key="1">
    <source>
        <dbReference type="HAMAP-Rule" id="MF_00068"/>
    </source>
</evidence>
<proteinExistence type="inferred from homology"/>
<sequence length="302" mass="32610">MTNISLDKLVTESRNENTKNIDRVETLEMLKMINNEDKKVAEAVEKELIHIAKAVDKIGEAFLNGGRLIYVGAGTSGRLGVLDASECPPTYGVSYDLVRGIIAGGESAMFKAREGAEDSKKLCIKDLKNINFGKNDILAGIAASGRTPYVIGGLEYANGIGATTISVTCNPESEMSKIANISIAPVVGPEAITGSTRMKAGTAQKMVLNMLSTGAMVKTGKVYGNLMVDLKATNEKLVERAKRIVMQATGSKREQVEKILKETNFDVKLSIFMIESSLDKIKAKEILDKNKGYIVEAIKEIS</sequence>
<reference key="1">
    <citation type="journal article" date="2007" name="PLoS ONE">
        <title>Analysis of the neurotoxin complex genes in Clostridium botulinum A1-A4 and B1 strains: BoNT/A3, /Ba4 and /B1 clusters are located within plasmids.</title>
        <authorList>
            <person name="Smith T.J."/>
            <person name="Hill K.K."/>
            <person name="Foley B.T."/>
            <person name="Detter J.C."/>
            <person name="Munk A.C."/>
            <person name="Bruce D.C."/>
            <person name="Doggett N.A."/>
            <person name="Smith L.A."/>
            <person name="Marks J.D."/>
            <person name="Xie G."/>
            <person name="Brettin T.S."/>
        </authorList>
    </citation>
    <scope>NUCLEOTIDE SEQUENCE [LARGE SCALE GENOMIC DNA]</scope>
    <source>
        <strain>ATCC 19397 / Type A</strain>
    </source>
</reference>